<sequence length="95" mass="10692">MTKSELIEKLADKLSHLSAKEVEKSIKEILELMAQSLSKGERIEIRGFGSFSLHYRAPRVGRNPKTGESVELSGKYVPHFKPGKELRERVNLSVA</sequence>
<gene>
    <name evidence="1" type="primary">ihfB</name>
    <name evidence="1" type="synonym">himD</name>
    <name type="ordered locus">CPS_2336</name>
</gene>
<name>IHFB_COLP3</name>
<keyword id="KW-0233">DNA recombination</keyword>
<keyword id="KW-0238">DNA-binding</keyword>
<keyword id="KW-0804">Transcription</keyword>
<keyword id="KW-0805">Transcription regulation</keyword>
<keyword id="KW-0810">Translation regulation</keyword>
<organism>
    <name type="scientific">Colwellia psychrerythraea (strain 34H / ATCC BAA-681)</name>
    <name type="common">Vibrio psychroerythus</name>
    <dbReference type="NCBI Taxonomy" id="167879"/>
    <lineage>
        <taxon>Bacteria</taxon>
        <taxon>Pseudomonadati</taxon>
        <taxon>Pseudomonadota</taxon>
        <taxon>Gammaproteobacteria</taxon>
        <taxon>Alteromonadales</taxon>
        <taxon>Colwelliaceae</taxon>
        <taxon>Colwellia</taxon>
    </lineage>
</organism>
<reference key="1">
    <citation type="journal article" date="2005" name="Proc. Natl. Acad. Sci. U.S.A.">
        <title>The psychrophilic lifestyle as revealed by the genome sequence of Colwellia psychrerythraea 34H through genomic and proteomic analyses.</title>
        <authorList>
            <person name="Methe B.A."/>
            <person name="Nelson K.E."/>
            <person name="Deming J.W."/>
            <person name="Momen B."/>
            <person name="Melamud E."/>
            <person name="Zhang X."/>
            <person name="Moult J."/>
            <person name="Madupu R."/>
            <person name="Nelson W.C."/>
            <person name="Dodson R.J."/>
            <person name="Brinkac L.M."/>
            <person name="Daugherty S.C."/>
            <person name="Durkin A.S."/>
            <person name="DeBoy R.T."/>
            <person name="Kolonay J.F."/>
            <person name="Sullivan S.A."/>
            <person name="Zhou L."/>
            <person name="Davidsen T.M."/>
            <person name="Wu M."/>
            <person name="Huston A.L."/>
            <person name="Lewis M."/>
            <person name="Weaver B."/>
            <person name="Weidman J.F."/>
            <person name="Khouri H."/>
            <person name="Utterback T.R."/>
            <person name="Feldblyum T.V."/>
            <person name="Fraser C.M."/>
        </authorList>
    </citation>
    <scope>NUCLEOTIDE SEQUENCE [LARGE SCALE GENOMIC DNA]</scope>
    <source>
        <strain>34H / ATCC BAA-681</strain>
    </source>
</reference>
<dbReference type="EMBL" id="CP000083">
    <property type="protein sequence ID" value="AAZ25012.1"/>
    <property type="molecule type" value="Genomic_DNA"/>
</dbReference>
<dbReference type="RefSeq" id="WP_011043150.1">
    <property type="nucleotide sequence ID" value="NC_003910.7"/>
</dbReference>
<dbReference type="SMR" id="Q482G2"/>
<dbReference type="STRING" id="167879.CPS_2336"/>
<dbReference type="KEGG" id="cps:CPS_2336"/>
<dbReference type="eggNOG" id="COG0776">
    <property type="taxonomic scope" value="Bacteria"/>
</dbReference>
<dbReference type="HOGENOM" id="CLU_105066_2_0_6"/>
<dbReference type="Proteomes" id="UP000000547">
    <property type="component" value="Chromosome"/>
</dbReference>
<dbReference type="GO" id="GO:0005694">
    <property type="term" value="C:chromosome"/>
    <property type="evidence" value="ECO:0007669"/>
    <property type="project" value="InterPro"/>
</dbReference>
<dbReference type="GO" id="GO:0005829">
    <property type="term" value="C:cytosol"/>
    <property type="evidence" value="ECO:0007669"/>
    <property type="project" value="TreeGrafter"/>
</dbReference>
<dbReference type="GO" id="GO:0003677">
    <property type="term" value="F:DNA binding"/>
    <property type="evidence" value="ECO:0007669"/>
    <property type="project" value="UniProtKB-UniRule"/>
</dbReference>
<dbReference type="GO" id="GO:0030527">
    <property type="term" value="F:structural constituent of chromatin"/>
    <property type="evidence" value="ECO:0007669"/>
    <property type="project" value="InterPro"/>
</dbReference>
<dbReference type="GO" id="GO:0006310">
    <property type="term" value="P:DNA recombination"/>
    <property type="evidence" value="ECO:0007669"/>
    <property type="project" value="UniProtKB-UniRule"/>
</dbReference>
<dbReference type="GO" id="GO:0006355">
    <property type="term" value="P:regulation of DNA-templated transcription"/>
    <property type="evidence" value="ECO:0007669"/>
    <property type="project" value="UniProtKB-UniRule"/>
</dbReference>
<dbReference type="GO" id="GO:0006417">
    <property type="term" value="P:regulation of translation"/>
    <property type="evidence" value="ECO:0007669"/>
    <property type="project" value="UniProtKB-UniRule"/>
</dbReference>
<dbReference type="CDD" id="cd13836">
    <property type="entry name" value="IHF_B"/>
    <property type="match status" value="1"/>
</dbReference>
<dbReference type="FunFam" id="4.10.520.10:FF:000003">
    <property type="entry name" value="Integration host factor subunit beta"/>
    <property type="match status" value="1"/>
</dbReference>
<dbReference type="Gene3D" id="4.10.520.10">
    <property type="entry name" value="IHF-like DNA-binding proteins"/>
    <property type="match status" value="1"/>
</dbReference>
<dbReference type="HAMAP" id="MF_00381">
    <property type="entry name" value="IHF_beta"/>
    <property type="match status" value="1"/>
</dbReference>
<dbReference type="InterPro" id="IPR000119">
    <property type="entry name" value="Hist_DNA-bd"/>
</dbReference>
<dbReference type="InterPro" id="IPR020816">
    <property type="entry name" value="Histone-like_DNA-bd_CS"/>
</dbReference>
<dbReference type="InterPro" id="IPR010992">
    <property type="entry name" value="IHF-like_DNA-bd_dom_sf"/>
</dbReference>
<dbReference type="InterPro" id="IPR005685">
    <property type="entry name" value="IHF_beta"/>
</dbReference>
<dbReference type="NCBIfam" id="TIGR00988">
    <property type="entry name" value="hip"/>
    <property type="match status" value="1"/>
</dbReference>
<dbReference type="NCBIfam" id="NF001222">
    <property type="entry name" value="PRK00199.1"/>
    <property type="match status" value="1"/>
</dbReference>
<dbReference type="PANTHER" id="PTHR33175">
    <property type="entry name" value="DNA-BINDING PROTEIN HU"/>
    <property type="match status" value="1"/>
</dbReference>
<dbReference type="PANTHER" id="PTHR33175:SF5">
    <property type="entry name" value="INTEGRATION HOST FACTOR SUBUNIT BETA"/>
    <property type="match status" value="1"/>
</dbReference>
<dbReference type="Pfam" id="PF00216">
    <property type="entry name" value="Bac_DNA_binding"/>
    <property type="match status" value="1"/>
</dbReference>
<dbReference type="PRINTS" id="PR01727">
    <property type="entry name" value="DNABINDINGHU"/>
</dbReference>
<dbReference type="SMART" id="SM00411">
    <property type="entry name" value="BHL"/>
    <property type="match status" value="1"/>
</dbReference>
<dbReference type="SUPFAM" id="SSF47729">
    <property type="entry name" value="IHF-like DNA-binding proteins"/>
    <property type="match status" value="1"/>
</dbReference>
<dbReference type="PROSITE" id="PS00045">
    <property type="entry name" value="HISTONE_LIKE"/>
    <property type="match status" value="1"/>
</dbReference>
<proteinExistence type="inferred from homology"/>
<feature type="chain" id="PRO_1000060596" description="Integration host factor subunit beta">
    <location>
        <begin position="1"/>
        <end position="95"/>
    </location>
</feature>
<accession>Q482G2</accession>
<comment type="function">
    <text evidence="1">This protein is one of the two subunits of integration host factor, a specific DNA-binding protein that functions in genetic recombination as well as in transcriptional and translational control.</text>
</comment>
<comment type="subunit">
    <text evidence="1">Heterodimer of an alpha and a beta chain.</text>
</comment>
<comment type="similarity">
    <text evidence="1">Belongs to the bacterial histone-like protein family.</text>
</comment>
<protein>
    <recommendedName>
        <fullName evidence="1">Integration host factor subunit beta</fullName>
        <shortName evidence="1">IHF-beta</shortName>
    </recommendedName>
</protein>
<evidence type="ECO:0000255" key="1">
    <source>
        <dbReference type="HAMAP-Rule" id="MF_00381"/>
    </source>
</evidence>